<feature type="chain" id="PRO_1000025577" description="Phosphoenolpyruvate carboxylase">
    <location>
        <begin position="1"/>
        <end position="876"/>
    </location>
</feature>
<feature type="active site" evidence="1">
    <location>
        <position position="138"/>
    </location>
</feature>
<feature type="active site" evidence="1">
    <location>
        <position position="543"/>
    </location>
</feature>
<keyword id="KW-0120">Carbon dioxide fixation</keyword>
<keyword id="KW-0456">Lyase</keyword>
<keyword id="KW-0460">Magnesium</keyword>
<organism>
    <name type="scientific">Pseudomonas fluorescens (strain ATCC BAA-477 / NRRL B-23932 / Pf-5)</name>
    <dbReference type="NCBI Taxonomy" id="220664"/>
    <lineage>
        <taxon>Bacteria</taxon>
        <taxon>Pseudomonadati</taxon>
        <taxon>Pseudomonadota</taxon>
        <taxon>Gammaproteobacteria</taxon>
        <taxon>Pseudomonadales</taxon>
        <taxon>Pseudomonadaceae</taxon>
        <taxon>Pseudomonas</taxon>
    </lineage>
</organism>
<evidence type="ECO:0000255" key="1">
    <source>
        <dbReference type="HAMAP-Rule" id="MF_00595"/>
    </source>
</evidence>
<protein>
    <recommendedName>
        <fullName evidence="1">Phosphoenolpyruvate carboxylase</fullName>
        <shortName evidence="1">PEPC</shortName>
        <shortName evidence="1">PEPCase</shortName>
        <ecNumber evidence="1">4.1.1.31</ecNumber>
    </recommendedName>
</protein>
<proteinExistence type="inferred from homology"/>
<name>CAPP_PSEF5</name>
<comment type="function">
    <text evidence="1">Forms oxaloacetate, a four-carbon dicarboxylic acid source for the tricarboxylic acid cycle.</text>
</comment>
<comment type="catalytic activity">
    <reaction evidence="1">
        <text>oxaloacetate + phosphate = phosphoenolpyruvate + hydrogencarbonate</text>
        <dbReference type="Rhea" id="RHEA:28370"/>
        <dbReference type="ChEBI" id="CHEBI:16452"/>
        <dbReference type="ChEBI" id="CHEBI:17544"/>
        <dbReference type="ChEBI" id="CHEBI:43474"/>
        <dbReference type="ChEBI" id="CHEBI:58702"/>
        <dbReference type="EC" id="4.1.1.31"/>
    </reaction>
</comment>
<comment type="cofactor">
    <cofactor evidence="1">
        <name>Mg(2+)</name>
        <dbReference type="ChEBI" id="CHEBI:18420"/>
    </cofactor>
</comment>
<comment type="similarity">
    <text evidence="1">Belongs to the PEPCase type 1 family.</text>
</comment>
<sequence length="876" mass="97194">MTDIDARLREDVHLLGELLGNTIRDQYGEAFLDKIEQIRKGAKADRRGSPGAELSASLDQLSEDELLPVARAFNQFLNLANIAEQYQLIHRRDESQPAPFEARVLPELLARLRAEGHSADALARQLGRLEIELVLTAHPTEVARRTLIQKYDAIAGQLAAQDHRDLTSAERGQIQERLQRLIAEAWHTEEIRRTRPTPVDEAKWGFAVIEHSLWQAIPNYLRKADKALFEATGLHLPLESAPIRFASWMGGDRDGNPNVTAAVTREVLLLARWMAADLYLRDIDHLAAELSMQQASPALLARAGDSAEPYRALLKQLRERLRATRNWAHAALSAAVPAGAEVLHNNRDLLEPLQLCYQSLHECGMGVIADGPLLDCLRRAVTFGLFLVRLDVRQDSSRHTSAMTEITDYLGLGRYEDWSEEDRITFLMRELSSRRPLLPGYFKPSADTAEVLATCREIAGAPAASLGSYVISMAGAASDVLAVQLLLKESGVLRPMRVVPLFETLADLDNAGPVMEKLLHMPGYRSRLQGPQEVMIGYSDSAKDAGTTAAAWAQYRAQERLVDICREQQVELLLFHGRGGTVGRGGGPAHAAILSQPPGSVAGRFRTTEQGEMIRFKFGLPDIAEQNLNLYLAAVLEATLLPPPPPQPAWRHLMDELASDGVRAYREVVRDNPQFVEYFRQSTPEQELGRLPLGSRPAKRRAGGIESLRAIPWIFGWTQTRLMLPAWLGWEAALSKALARGEGDLLGQMREQWPFFRTRIDMLEMVLAKADADIARSYDERLVEAELLPLGEHLRDLLSQACAVVLGLTGQSQLLAHSPDTLEFIRLRNTYLDPLHLLQAELLARSRKQQAPQGSPVEQALLVSVAGIAAGLRNTG</sequence>
<reference key="1">
    <citation type="journal article" date="2005" name="Nat. Biotechnol.">
        <title>Complete genome sequence of the plant commensal Pseudomonas fluorescens Pf-5.</title>
        <authorList>
            <person name="Paulsen I.T."/>
            <person name="Press C.M."/>
            <person name="Ravel J."/>
            <person name="Kobayashi D.Y."/>
            <person name="Myers G.S.A."/>
            <person name="Mavrodi D.V."/>
            <person name="DeBoy R.T."/>
            <person name="Seshadri R."/>
            <person name="Ren Q."/>
            <person name="Madupu R."/>
            <person name="Dodson R.J."/>
            <person name="Durkin A.S."/>
            <person name="Brinkac L.M."/>
            <person name="Daugherty S.C."/>
            <person name="Sullivan S.A."/>
            <person name="Rosovitz M.J."/>
            <person name="Gwinn M.L."/>
            <person name="Zhou L."/>
            <person name="Schneider D.J."/>
            <person name="Cartinhour S.W."/>
            <person name="Nelson W.C."/>
            <person name="Weidman J."/>
            <person name="Watkins K."/>
            <person name="Tran K."/>
            <person name="Khouri H."/>
            <person name="Pierson E.A."/>
            <person name="Pierson L.S. III"/>
            <person name="Thomashow L.S."/>
            <person name="Loper J.E."/>
        </authorList>
    </citation>
    <scope>NUCLEOTIDE SEQUENCE [LARGE SCALE GENOMIC DNA]</scope>
    <source>
        <strain>ATCC BAA-477 / NRRL B-23932 / Pf-5</strain>
    </source>
</reference>
<gene>
    <name evidence="1" type="primary">ppc</name>
    <name type="ordered locus">PFL_1147</name>
</gene>
<accession>Q4KHK5</accession>
<dbReference type="EC" id="4.1.1.31" evidence="1"/>
<dbReference type="EMBL" id="CP000076">
    <property type="protein sequence ID" value="AAY90434.1"/>
    <property type="molecule type" value="Genomic_DNA"/>
</dbReference>
<dbReference type="RefSeq" id="WP_011059495.1">
    <property type="nucleotide sequence ID" value="NC_004129.6"/>
</dbReference>
<dbReference type="SMR" id="Q4KHK5"/>
<dbReference type="STRING" id="220664.PFL_1147"/>
<dbReference type="KEGG" id="pfl:PFL_1147"/>
<dbReference type="PATRIC" id="fig|220664.5.peg.1178"/>
<dbReference type="eggNOG" id="COG2352">
    <property type="taxonomic scope" value="Bacteria"/>
</dbReference>
<dbReference type="HOGENOM" id="CLU_006557_2_0_6"/>
<dbReference type="Proteomes" id="UP000008540">
    <property type="component" value="Chromosome"/>
</dbReference>
<dbReference type="GO" id="GO:0005829">
    <property type="term" value="C:cytosol"/>
    <property type="evidence" value="ECO:0007669"/>
    <property type="project" value="TreeGrafter"/>
</dbReference>
<dbReference type="GO" id="GO:0000287">
    <property type="term" value="F:magnesium ion binding"/>
    <property type="evidence" value="ECO:0007669"/>
    <property type="project" value="UniProtKB-UniRule"/>
</dbReference>
<dbReference type="GO" id="GO:0008964">
    <property type="term" value="F:phosphoenolpyruvate carboxylase activity"/>
    <property type="evidence" value="ECO:0007669"/>
    <property type="project" value="UniProtKB-UniRule"/>
</dbReference>
<dbReference type="GO" id="GO:0015977">
    <property type="term" value="P:carbon fixation"/>
    <property type="evidence" value="ECO:0007669"/>
    <property type="project" value="UniProtKB-UniRule"/>
</dbReference>
<dbReference type="GO" id="GO:0006107">
    <property type="term" value="P:oxaloacetate metabolic process"/>
    <property type="evidence" value="ECO:0007669"/>
    <property type="project" value="UniProtKB-UniRule"/>
</dbReference>
<dbReference type="GO" id="GO:0006099">
    <property type="term" value="P:tricarboxylic acid cycle"/>
    <property type="evidence" value="ECO:0007669"/>
    <property type="project" value="InterPro"/>
</dbReference>
<dbReference type="Gene3D" id="1.20.1440.90">
    <property type="entry name" value="Phosphoenolpyruvate/pyruvate domain"/>
    <property type="match status" value="1"/>
</dbReference>
<dbReference type="HAMAP" id="MF_00595">
    <property type="entry name" value="PEPcase_type1"/>
    <property type="match status" value="1"/>
</dbReference>
<dbReference type="InterPro" id="IPR021135">
    <property type="entry name" value="PEP_COase"/>
</dbReference>
<dbReference type="InterPro" id="IPR022805">
    <property type="entry name" value="PEP_COase_bac/pln-type"/>
</dbReference>
<dbReference type="InterPro" id="IPR018129">
    <property type="entry name" value="PEP_COase_Lys_AS"/>
</dbReference>
<dbReference type="InterPro" id="IPR033129">
    <property type="entry name" value="PEPCASE_His_AS"/>
</dbReference>
<dbReference type="InterPro" id="IPR015813">
    <property type="entry name" value="Pyrv/PenolPyrv_kinase-like_dom"/>
</dbReference>
<dbReference type="NCBIfam" id="NF000584">
    <property type="entry name" value="PRK00009.1"/>
    <property type="match status" value="1"/>
</dbReference>
<dbReference type="PANTHER" id="PTHR30523">
    <property type="entry name" value="PHOSPHOENOLPYRUVATE CARBOXYLASE"/>
    <property type="match status" value="1"/>
</dbReference>
<dbReference type="PANTHER" id="PTHR30523:SF6">
    <property type="entry name" value="PHOSPHOENOLPYRUVATE CARBOXYLASE"/>
    <property type="match status" value="1"/>
</dbReference>
<dbReference type="Pfam" id="PF00311">
    <property type="entry name" value="PEPcase"/>
    <property type="match status" value="1"/>
</dbReference>
<dbReference type="PRINTS" id="PR00150">
    <property type="entry name" value="PEPCARBXLASE"/>
</dbReference>
<dbReference type="SUPFAM" id="SSF51621">
    <property type="entry name" value="Phosphoenolpyruvate/pyruvate domain"/>
    <property type="match status" value="1"/>
</dbReference>
<dbReference type="PROSITE" id="PS00781">
    <property type="entry name" value="PEPCASE_1"/>
    <property type="match status" value="1"/>
</dbReference>
<dbReference type="PROSITE" id="PS00393">
    <property type="entry name" value="PEPCASE_2"/>
    <property type="match status" value="1"/>
</dbReference>